<keyword id="KW-1185">Reference proteome</keyword>
<reference key="1">
    <citation type="journal article" date="2002" name="Mol. Biol. Cell">
        <title>An endogenous RNA transcript antisense to CNG(alpha)1 cation channel mRNA.</title>
        <authorList>
            <person name="Cheng C.-H."/>
            <person name="Yew D.-T."/>
            <person name="Kwan H.-Y."/>
            <person name="Zhou Q."/>
            <person name="Huang Y."/>
            <person name="Liu Y."/>
            <person name="Chan W.-Y."/>
            <person name="Yao X."/>
        </authorList>
    </citation>
    <scope>NUCLEOTIDE SEQUENCE [MRNA]</scope>
    <scope>TISSUE SPECIFICITY</scope>
</reference>
<comment type="tissue specificity">
    <text evidence="1">Expressed in brain, notably in regions involved in long-term potentiation and long-term depression, such as hippocampal CA1 and CA3, dentate gyrus and cerebellar Purkinje layer.</text>
</comment>
<comment type="miscellaneous">
    <text>Located on the opposite DNA strand of the CNGA1 gene at chromosome 4p13. Its transcription may play a role in CNGA1 transcription regulation.</text>
</comment>
<comment type="caution">
    <text evidence="2">Could be the product of a pseudogene. According to PubMed:12388767, it is not clear whether this transcript encodes a protein.</text>
</comment>
<accession>Q8IZM0</accession>
<proteinExistence type="uncertain"/>
<sequence length="81" mass="9081">MDSYSAKIRANLVCRRSTDPSIRVTFSSRSLGSLPAFAMFRSSRPSFIKICFPFSSSIVLASGYSVRASMRSSFERQNRSE</sequence>
<evidence type="ECO:0000269" key="1">
    <source>
    </source>
</evidence>
<evidence type="ECO:0000305" key="2"/>
<protein>
    <recommendedName>
        <fullName>Putative CNGA1-overlapping antisense gene protein</fullName>
    </recommendedName>
    <alternativeName>
        <fullName>Anti-CNG1</fullName>
    </alternativeName>
</protein>
<organism>
    <name type="scientific">Homo sapiens</name>
    <name type="common">Human</name>
    <dbReference type="NCBI Taxonomy" id="9606"/>
    <lineage>
        <taxon>Eukaryota</taxon>
        <taxon>Metazoa</taxon>
        <taxon>Chordata</taxon>
        <taxon>Craniata</taxon>
        <taxon>Vertebrata</taxon>
        <taxon>Euteleostomi</taxon>
        <taxon>Mammalia</taxon>
        <taxon>Eutheria</taxon>
        <taxon>Euarchontoglires</taxon>
        <taxon>Primates</taxon>
        <taxon>Haplorrhini</taxon>
        <taxon>Catarrhini</taxon>
        <taxon>Hominidae</taxon>
        <taxon>Homo</taxon>
    </lineage>
</organism>
<feature type="chain" id="PRO_0000337143" description="Putative CNGA1-overlapping antisense gene protein">
    <location>
        <begin position="1"/>
        <end position="81"/>
    </location>
</feature>
<dbReference type="EMBL" id="AF547222">
    <property type="protein sequence ID" value="AAN65378.1"/>
    <property type="molecule type" value="mRNA"/>
</dbReference>
<dbReference type="BioMuta" id="-"/>
<dbReference type="neXtProt" id="NX_Q8IZM0"/>
<dbReference type="InParanoid" id="Q8IZM0"/>
<dbReference type="PAN-GO" id="Q8IZM0">
    <property type="GO annotations" value="0 GO annotations based on evolutionary models"/>
</dbReference>
<dbReference type="Pharos" id="Q8IZM0">
    <property type="development level" value="Tdark"/>
</dbReference>
<dbReference type="Proteomes" id="UP000005640">
    <property type="component" value="Unplaced"/>
</dbReference>
<dbReference type="RNAct" id="Q8IZM0">
    <property type="molecule type" value="protein"/>
</dbReference>
<name>CNG1O_HUMAN</name>